<keyword id="KW-0010">Activator</keyword>
<keyword id="KW-0963">Cytoplasm</keyword>
<keyword id="KW-1185">Reference proteome</keyword>
<keyword id="KW-0678">Repressor</keyword>
<keyword id="KW-0694">RNA-binding</keyword>
<keyword id="KW-0810">Translation regulation</keyword>
<organism>
    <name type="scientific">Stutzerimonas stutzeri (strain A1501)</name>
    <name type="common">Pseudomonas stutzeri</name>
    <dbReference type="NCBI Taxonomy" id="379731"/>
    <lineage>
        <taxon>Bacteria</taxon>
        <taxon>Pseudomonadati</taxon>
        <taxon>Pseudomonadota</taxon>
        <taxon>Gammaproteobacteria</taxon>
        <taxon>Pseudomonadales</taxon>
        <taxon>Pseudomonadaceae</taxon>
        <taxon>Stutzerimonas</taxon>
    </lineage>
</organism>
<protein>
    <recommendedName>
        <fullName evidence="1">Translational regulator CsrA</fullName>
    </recommendedName>
    <alternativeName>
        <fullName evidence="1">Carbon storage regulator</fullName>
    </alternativeName>
</protein>
<proteinExistence type="inferred from homology"/>
<accession>A4VJB5</accession>
<comment type="function">
    <text evidence="1">A key translational regulator that binds mRNA to regulate translation initiation and/or mRNA stability. Mediates global changes in gene expression, shifting from rapid growth to stress survival by linking envelope stress, the stringent response and the catabolite repression systems. Usually binds in the 5'-UTR; binding at or near the Shine-Dalgarno sequence prevents ribosome-binding, repressing translation, binding elsewhere in the 5'-UTR can activate translation and/or stabilize the mRNA. Its function is antagonized by small RNA(s).</text>
</comment>
<comment type="subunit">
    <text evidence="1">Homodimer; the beta-strands of each monomer intercalate to form a hydrophobic core, while the alpha-helices form wings that extend away from the core.</text>
</comment>
<comment type="subcellular location">
    <subcellularLocation>
        <location evidence="1">Cytoplasm</location>
    </subcellularLocation>
</comment>
<comment type="similarity">
    <text evidence="1">Belongs to the CsrA/RsmA family.</text>
</comment>
<sequence>MLILTRRVGETLMVGDDVTVTVLGVKGNQVRIGVNAPKEVAVHREEIYQRIQKEKDQEPSH</sequence>
<evidence type="ECO:0000255" key="1">
    <source>
        <dbReference type="HAMAP-Rule" id="MF_00167"/>
    </source>
</evidence>
<feature type="chain" id="PRO_1000023408" description="Translational regulator CsrA">
    <location>
        <begin position="1"/>
        <end position="61"/>
    </location>
</feature>
<name>CSRA_STUS1</name>
<reference key="1">
    <citation type="journal article" date="2008" name="Proc. Natl. Acad. Sci. U.S.A.">
        <title>Nitrogen fixation island and rhizosphere competence traits in the genome of root-associated Pseudomonas stutzeri A1501.</title>
        <authorList>
            <person name="Yan Y."/>
            <person name="Yang J."/>
            <person name="Dou Y."/>
            <person name="Chen M."/>
            <person name="Ping S."/>
            <person name="Peng J."/>
            <person name="Lu W."/>
            <person name="Zhang W."/>
            <person name="Yao Z."/>
            <person name="Li H."/>
            <person name="Liu W."/>
            <person name="He S."/>
            <person name="Geng L."/>
            <person name="Zhang X."/>
            <person name="Yang F."/>
            <person name="Yu H."/>
            <person name="Zhan Y."/>
            <person name="Li D."/>
            <person name="Lin Z."/>
            <person name="Wang Y."/>
            <person name="Elmerich C."/>
            <person name="Lin M."/>
            <person name="Jin Q."/>
        </authorList>
    </citation>
    <scope>NUCLEOTIDE SEQUENCE [LARGE SCALE GENOMIC DNA]</scope>
    <source>
        <strain>A1501</strain>
    </source>
</reference>
<gene>
    <name evidence="1" type="primary">csrA</name>
    <name type="ordered locus">PST_1371</name>
</gene>
<dbReference type="EMBL" id="CP000304">
    <property type="protein sequence ID" value="ABP79066.1"/>
    <property type="molecule type" value="Genomic_DNA"/>
</dbReference>
<dbReference type="RefSeq" id="WP_003283978.1">
    <property type="nucleotide sequence ID" value="NC_009434.1"/>
</dbReference>
<dbReference type="SMR" id="A4VJB5"/>
<dbReference type="GeneID" id="98638669"/>
<dbReference type="KEGG" id="psa:PST_1371"/>
<dbReference type="eggNOG" id="COG1551">
    <property type="taxonomic scope" value="Bacteria"/>
</dbReference>
<dbReference type="HOGENOM" id="CLU_164837_2_1_6"/>
<dbReference type="Proteomes" id="UP000000233">
    <property type="component" value="Chromosome"/>
</dbReference>
<dbReference type="GO" id="GO:0005829">
    <property type="term" value="C:cytosol"/>
    <property type="evidence" value="ECO:0007669"/>
    <property type="project" value="TreeGrafter"/>
</dbReference>
<dbReference type="GO" id="GO:0048027">
    <property type="term" value="F:mRNA 5'-UTR binding"/>
    <property type="evidence" value="ECO:0007669"/>
    <property type="project" value="UniProtKB-UniRule"/>
</dbReference>
<dbReference type="GO" id="GO:0006402">
    <property type="term" value="P:mRNA catabolic process"/>
    <property type="evidence" value="ECO:0007669"/>
    <property type="project" value="InterPro"/>
</dbReference>
<dbReference type="GO" id="GO:0045947">
    <property type="term" value="P:negative regulation of translational initiation"/>
    <property type="evidence" value="ECO:0007669"/>
    <property type="project" value="UniProtKB-UniRule"/>
</dbReference>
<dbReference type="GO" id="GO:0045948">
    <property type="term" value="P:positive regulation of translational initiation"/>
    <property type="evidence" value="ECO:0007669"/>
    <property type="project" value="UniProtKB-UniRule"/>
</dbReference>
<dbReference type="GO" id="GO:0006109">
    <property type="term" value="P:regulation of carbohydrate metabolic process"/>
    <property type="evidence" value="ECO:0007669"/>
    <property type="project" value="UniProtKB-UniRule"/>
</dbReference>
<dbReference type="FunFam" id="2.60.40.4380:FF:000001">
    <property type="entry name" value="Translational regulator CsrA"/>
    <property type="match status" value="1"/>
</dbReference>
<dbReference type="Gene3D" id="2.60.40.4380">
    <property type="entry name" value="Translational regulator CsrA"/>
    <property type="match status" value="1"/>
</dbReference>
<dbReference type="HAMAP" id="MF_00167">
    <property type="entry name" value="CsrA"/>
    <property type="match status" value="1"/>
</dbReference>
<dbReference type="InterPro" id="IPR003751">
    <property type="entry name" value="CsrA"/>
</dbReference>
<dbReference type="InterPro" id="IPR036107">
    <property type="entry name" value="CsrA_sf"/>
</dbReference>
<dbReference type="NCBIfam" id="TIGR00202">
    <property type="entry name" value="csrA"/>
    <property type="match status" value="1"/>
</dbReference>
<dbReference type="NCBIfam" id="NF002469">
    <property type="entry name" value="PRK01712.1"/>
    <property type="match status" value="1"/>
</dbReference>
<dbReference type="PANTHER" id="PTHR34984">
    <property type="entry name" value="CARBON STORAGE REGULATOR"/>
    <property type="match status" value="1"/>
</dbReference>
<dbReference type="PANTHER" id="PTHR34984:SF1">
    <property type="entry name" value="CARBON STORAGE REGULATOR"/>
    <property type="match status" value="1"/>
</dbReference>
<dbReference type="Pfam" id="PF02599">
    <property type="entry name" value="CsrA"/>
    <property type="match status" value="1"/>
</dbReference>
<dbReference type="SUPFAM" id="SSF117130">
    <property type="entry name" value="CsrA-like"/>
    <property type="match status" value="1"/>
</dbReference>